<accession>B1VRH6</accession>
<evidence type="ECO:0000255" key="1">
    <source>
        <dbReference type="HAMAP-Rule" id="MF_01657"/>
    </source>
</evidence>
<reference key="1">
    <citation type="journal article" date="2008" name="J. Bacteriol.">
        <title>Genome sequence of the streptomycin-producing microorganism Streptomyces griseus IFO 13350.</title>
        <authorList>
            <person name="Ohnishi Y."/>
            <person name="Ishikawa J."/>
            <person name="Hara H."/>
            <person name="Suzuki H."/>
            <person name="Ikenoya M."/>
            <person name="Ikeda H."/>
            <person name="Yamashita A."/>
            <person name="Hattori M."/>
            <person name="Horinouchi S."/>
        </authorList>
    </citation>
    <scope>NUCLEOTIDE SEQUENCE [LARGE SCALE GENOMIC DNA]</scope>
    <source>
        <strain>JCM 4626 / CBS 651.72 / NBRC 13350 / KCC S-0626 / ISP 5235</strain>
    </source>
</reference>
<gene>
    <name type="ordered locus">SGR_565</name>
</gene>
<proteinExistence type="inferred from homology"/>
<sequence>MSLTAGLTDARPDTVETATVAVIGTGAIGRDLVSKIDRSPGLDCRLVAGRNPESAGLRYAESLGCATTAAGIDAVLAASPFDVVFDATSAASHRDHWPLLEPLGTLVIDLTPSKVGQMVAPTVTGVAAEDARNVNLISCGGQASVPVVHALAARFPVTYLEVVSTVASDVAGRATRLNLDEYVTATGHAVTTFSGVSDVKIILNISPAVPPATFRTVIHARVPDADAAAVRAVVDRAAEQVRSFAPGYEVVACTAADDLVTIVLKVTACSDVLPPYAGNLDIINAAAVLVAEQYAARPGRVSRTGVSS</sequence>
<dbReference type="EC" id="1.2.1.10" evidence="1"/>
<dbReference type="EMBL" id="AP009493">
    <property type="protein sequence ID" value="BAG17394.1"/>
    <property type="molecule type" value="Genomic_DNA"/>
</dbReference>
<dbReference type="RefSeq" id="WP_012377889.1">
    <property type="nucleotide sequence ID" value="NC_010572.1"/>
</dbReference>
<dbReference type="SMR" id="B1VRH6"/>
<dbReference type="KEGG" id="sgr:SGR_565"/>
<dbReference type="PATRIC" id="fig|455632.4.peg.547"/>
<dbReference type="eggNOG" id="COG4569">
    <property type="taxonomic scope" value="Bacteria"/>
</dbReference>
<dbReference type="HOGENOM" id="CLU_062208_0_0_11"/>
<dbReference type="Proteomes" id="UP000001685">
    <property type="component" value="Chromosome"/>
</dbReference>
<dbReference type="GO" id="GO:0008774">
    <property type="term" value="F:acetaldehyde dehydrogenase (acetylating) activity"/>
    <property type="evidence" value="ECO:0007669"/>
    <property type="project" value="UniProtKB-UniRule"/>
</dbReference>
<dbReference type="GO" id="GO:0051287">
    <property type="term" value="F:NAD binding"/>
    <property type="evidence" value="ECO:0007669"/>
    <property type="project" value="UniProtKB-UniRule"/>
</dbReference>
<dbReference type="GO" id="GO:0009056">
    <property type="term" value="P:catabolic process"/>
    <property type="evidence" value="ECO:0007669"/>
    <property type="project" value="UniProtKB-KW"/>
</dbReference>
<dbReference type="CDD" id="cd23933">
    <property type="entry name" value="ALDH_C"/>
    <property type="match status" value="1"/>
</dbReference>
<dbReference type="Gene3D" id="3.30.360.10">
    <property type="entry name" value="Dihydrodipicolinate Reductase, domain 2"/>
    <property type="match status" value="1"/>
</dbReference>
<dbReference type="Gene3D" id="3.40.50.720">
    <property type="entry name" value="NAD(P)-binding Rossmann-like Domain"/>
    <property type="match status" value="1"/>
</dbReference>
<dbReference type="HAMAP" id="MF_01657">
    <property type="entry name" value="Ac_ald_DH_ac"/>
    <property type="match status" value="1"/>
</dbReference>
<dbReference type="InterPro" id="IPR003361">
    <property type="entry name" value="Acetaldehyde_dehydrogenase"/>
</dbReference>
<dbReference type="InterPro" id="IPR015426">
    <property type="entry name" value="Acetylaldehyde_DH_C"/>
</dbReference>
<dbReference type="InterPro" id="IPR036291">
    <property type="entry name" value="NAD(P)-bd_dom_sf"/>
</dbReference>
<dbReference type="InterPro" id="IPR000534">
    <property type="entry name" value="Semialdehyde_DH_NAD-bd"/>
</dbReference>
<dbReference type="NCBIfam" id="TIGR03215">
    <property type="entry name" value="ac_ald_DH_ac"/>
    <property type="match status" value="1"/>
</dbReference>
<dbReference type="NCBIfam" id="NF006157">
    <property type="entry name" value="PRK08300.1"/>
    <property type="match status" value="1"/>
</dbReference>
<dbReference type="Pfam" id="PF09290">
    <property type="entry name" value="AcetDehyd-dimer"/>
    <property type="match status" value="1"/>
</dbReference>
<dbReference type="Pfam" id="PF01118">
    <property type="entry name" value="Semialdhyde_dh"/>
    <property type="match status" value="1"/>
</dbReference>
<dbReference type="PIRSF" id="PIRSF015689">
    <property type="entry name" value="Actaldh_dh_actl"/>
    <property type="match status" value="1"/>
</dbReference>
<dbReference type="SMART" id="SM00859">
    <property type="entry name" value="Semialdhyde_dh"/>
    <property type="match status" value="1"/>
</dbReference>
<dbReference type="SUPFAM" id="SSF55347">
    <property type="entry name" value="Glyceraldehyde-3-phosphate dehydrogenase-like, C-terminal domain"/>
    <property type="match status" value="1"/>
</dbReference>
<dbReference type="SUPFAM" id="SSF51735">
    <property type="entry name" value="NAD(P)-binding Rossmann-fold domains"/>
    <property type="match status" value="1"/>
</dbReference>
<protein>
    <recommendedName>
        <fullName evidence="1">Acetaldehyde dehydrogenase</fullName>
        <ecNumber evidence="1">1.2.1.10</ecNumber>
    </recommendedName>
    <alternativeName>
        <fullName evidence="1">Acetaldehyde dehydrogenase [acetylating]</fullName>
    </alternativeName>
</protein>
<keyword id="KW-0058">Aromatic hydrocarbons catabolism</keyword>
<keyword id="KW-0520">NAD</keyword>
<keyword id="KW-0560">Oxidoreductase</keyword>
<comment type="catalytic activity">
    <reaction evidence="1">
        <text>acetaldehyde + NAD(+) + CoA = acetyl-CoA + NADH + H(+)</text>
        <dbReference type="Rhea" id="RHEA:23288"/>
        <dbReference type="ChEBI" id="CHEBI:15343"/>
        <dbReference type="ChEBI" id="CHEBI:15378"/>
        <dbReference type="ChEBI" id="CHEBI:57287"/>
        <dbReference type="ChEBI" id="CHEBI:57288"/>
        <dbReference type="ChEBI" id="CHEBI:57540"/>
        <dbReference type="ChEBI" id="CHEBI:57945"/>
        <dbReference type="EC" id="1.2.1.10"/>
    </reaction>
</comment>
<comment type="similarity">
    <text evidence="1">Belongs to the acetaldehyde dehydrogenase family.</text>
</comment>
<name>ACDH_STRGG</name>
<feature type="chain" id="PRO_0000387747" description="Acetaldehyde dehydrogenase">
    <location>
        <begin position="1"/>
        <end position="308"/>
    </location>
</feature>
<feature type="active site" description="Acyl-thioester intermediate" evidence="1">
    <location>
        <position position="139"/>
    </location>
</feature>
<feature type="binding site" evidence="1">
    <location>
        <begin position="25"/>
        <end position="28"/>
    </location>
    <ligand>
        <name>NAD(+)</name>
        <dbReference type="ChEBI" id="CHEBI:57540"/>
    </ligand>
</feature>
<feature type="binding site" evidence="1">
    <location>
        <position position="279"/>
    </location>
    <ligand>
        <name>NAD(+)</name>
        <dbReference type="ChEBI" id="CHEBI:57540"/>
    </ligand>
</feature>
<organism>
    <name type="scientific">Streptomyces griseus subsp. griseus (strain JCM 4626 / CBS 651.72 / NBRC 13350 / KCC S-0626 / ISP 5235)</name>
    <dbReference type="NCBI Taxonomy" id="455632"/>
    <lineage>
        <taxon>Bacteria</taxon>
        <taxon>Bacillati</taxon>
        <taxon>Actinomycetota</taxon>
        <taxon>Actinomycetes</taxon>
        <taxon>Kitasatosporales</taxon>
        <taxon>Streptomycetaceae</taxon>
        <taxon>Streptomyces</taxon>
    </lineage>
</organism>